<evidence type="ECO:0000250" key="1"/>
<evidence type="ECO:0000255" key="2"/>
<evidence type="ECO:0000255" key="3">
    <source>
        <dbReference type="PROSITE-ProRule" id="PRU00274"/>
    </source>
</evidence>
<evidence type="ECO:0000269" key="4">
    <source>
    </source>
</evidence>
<evidence type="ECO:0000305" key="5">
    <source>
    </source>
</evidence>
<comment type="function">
    <text evidence="4">The recombinant protein has fibrinogenolytic activity against the Aalpha chain (FGA) of fibrinogen. Activates plasminogen (PLG) (is 4-fold less active than urokinase). Has weak thrombin-like enzyme activity. Has enzymatic activity against a trypsin-like substrate (S-3013) and shows a weaker activity on an activated protein C substrate (S-3125).</text>
</comment>
<comment type="subunit">
    <text evidence="1">Monomer.</text>
</comment>
<comment type="subcellular location">
    <subcellularLocation>
        <location evidence="1">Secreted</location>
    </subcellularLocation>
</comment>
<comment type="tissue specificity">
    <text>Expressed by the venom gland.</text>
</comment>
<comment type="miscellaneous">
    <text evidence="5">Negative results: has no enzymatic activity against a chymotrypsin substrate (S-3015). Does not show fibrinolytic activity against Bbeta (FGB) and gamma chains (FGG) of fibrinogen. Does not show activity on prothrombin (F2), factor V (F5) and factor X (F10). Does not induce platelet aggregation (PubMed:17346761).</text>
</comment>
<comment type="similarity">
    <text evidence="3">Belongs to the peptidase S1 family. Snake venom subfamily.</text>
</comment>
<accession>P0CJ41</accession>
<name>VSPAF_TRIAB</name>
<sequence length="258" mass="28001">MVLIRVLANLLILQLSYAQKSSELVVGGDECNINEHHSLVAIFNSTGFFCSGTLINQEWVVTAAHCDSKNFKMKFGAHSKKLLNEDEQIRNPKEKFICPNKKSNEILDKDIMLIKLDSPVSNSAHIAPLSLPSSPPSVGSVCRIMGWGSTTPIEVTYPDVPYCANINLLDDAECKPGYPELLPEYRTLCAGIVQGGKDTCGGDSGGPLICNEKLHGIVSYGGHPCGQSHKPGIYTNVFDYNDWIQSIIAGNTDATCLS</sequence>
<proteinExistence type="evidence at transcript level"/>
<reference key="1">
    <citation type="journal article" date="2006" name="Toxicon">
        <title>Molecular cloning of novel serine proteases and phospholipases A2 from green pit viper (Trimeresurus albolabris) venom gland cDNA library.</title>
        <authorList>
            <person name="Rojnuckarin P."/>
            <person name="Muanpasitporn C."/>
            <person name="Chanhome L."/>
            <person name="Arpijuntarangkoon J."/>
            <person name="Intragumtornchai T."/>
        </authorList>
    </citation>
    <scope>NUCLEOTIDE SEQUENCE [MRNA]</scope>
    <source>
        <tissue>Venom gland</tissue>
    </source>
</reference>
<reference key="2">
    <citation type="journal article" date="2007" name="Toxicon">
        <title>Expression and characterization of a recombinant fibrinogenolytic serine protease from green pit viper (Trimeresurus albolabris) venom.</title>
        <authorList>
            <person name="Muanpasitporn C."/>
            <person name="Rojnuckarin P."/>
        </authorList>
    </citation>
    <scope>FUNCTION</scope>
</reference>
<organism>
    <name type="scientific">Trimeresurus albolabris</name>
    <name type="common">White-lipped pit viper</name>
    <name type="synonym">Cryptelytrops albolabris</name>
    <dbReference type="NCBI Taxonomy" id="8765"/>
    <lineage>
        <taxon>Eukaryota</taxon>
        <taxon>Metazoa</taxon>
        <taxon>Chordata</taxon>
        <taxon>Craniata</taxon>
        <taxon>Vertebrata</taxon>
        <taxon>Euteleostomi</taxon>
        <taxon>Lepidosauria</taxon>
        <taxon>Squamata</taxon>
        <taxon>Bifurcata</taxon>
        <taxon>Unidentata</taxon>
        <taxon>Episquamata</taxon>
        <taxon>Toxicofera</taxon>
        <taxon>Serpentes</taxon>
        <taxon>Colubroidea</taxon>
        <taxon>Viperidae</taxon>
        <taxon>Crotalinae</taxon>
        <taxon>Trimeresurus</taxon>
    </lineage>
</organism>
<dbReference type="EC" id="3.4.21.-"/>
<dbReference type="SMR" id="P0CJ41"/>
<dbReference type="GO" id="GO:0005576">
    <property type="term" value="C:extracellular region"/>
    <property type="evidence" value="ECO:0007669"/>
    <property type="project" value="UniProtKB-SubCell"/>
</dbReference>
<dbReference type="GO" id="GO:0030141">
    <property type="term" value="C:secretory granule"/>
    <property type="evidence" value="ECO:0007669"/>
    <property type="project" value="TreeGrafter"/>
</dbReference>
<dbReference type="GO" id="GO:0004252">
    <property type="term" value="F:serine-type endopeptidase activity"/>
    <property type="evidence" value="ECO:0007669"/>
    <property type="project" value="InterPro"/>
</dbReference>
<dbReference type="GO" id="GO:0090729">
    <property type="term" value="F:toxin activity"/>
    <property type="evidence" value="ECO:0007669"/>
    <property type="project" value="UniProtKB-KW"/>
</dbReference>
<dbReference type="GO" id="GO:0006508">
    <property type="term" value="P:proteolysis"/>
    <property type="evidence" value="ECO:0007669"/>
    <property type="project" value="UniProtKB-KW"/>
</dbReference>
<dbReference type="CDD" id="cd00190">
    <property type="entry name" value="Tryp_SPc"/>
    <property type="match status" value="1"/>
</dbReference>
<dbReference type="FunFam" id="2.40.10.10:FF:000158">
    <property type="entry name" value="Thrombin-like enzyme saxthrombin"/>
    <property type="match status" value="1"/>
</dbReference>
<dbReference type="FunFam" id="2.40.10.10:FF:000153">
    <property type="entry name" value="Venom plasminogen activator TSV-PA"/>
    <property type="match status" value="1"/>
</dbReference>
<dbReference type="Gene3D" id="2.40.10.10">
    <property type="entry name" value="Trypsin-like serine proteases"/>
    <property type="match status" value="2"/>
</dbReference>
<dbReference type="InterPro" id="IPR009003">
    <property type="entry name" value="Peptidase_S1_PA"/>
</dbReference>
<dbReference type="InterPro" id="IPR043504">
    <property type="entry name" value="Peptidase_S1_PA_chymotrypsin"/>
</dbReference>
<dbReference type="InterPro" id="IPR001314">
    <property type="entry name" value="Peptidase_S1A"/>
</dbReference>
<dbReference type="InterPro" id="IPR001254">
    <property type="entry name" value="Trypsin_dom"/>
</dbReference>
<dbReference type="InterPro" id="IPR018114">
    <property type="entry name" value="TRYPSIN_HIS"/>
</dbReference>
<dbReference type="InterPro" id="IPR033116">
    <property type="entry name" value="TRYPSIN_SER"/>
</dbReference>
<dbReference type="PANTHER" id="PTHR24271:SF47">
    <property type="entry name" value="KALLIKREIN-1"/>
    <property type="match status" value="1"/>
</dbReference>
<dbReference type="PANTHER" id="PTHR24271">
    <property type="entry name" value="KALLIKREIN-RELATED"/>
    <property type="match status" value="1"/>
</dbReference>
<dbReference type="Pfam" id="PF00089">
    <property type="entry name" value="Trypsin"/>
    <property type="match status" value="1"/>
</dbReference>
<dbReference type="PRINTS" id="PR00722">
    <property type="entry name" value="CHYMOTRYPSIN"/>
</dbReference>
<dbReference type="SMART" id="SM00020">
    <property type="entry name" value="Tryp_SPc"/>
    <property type="match status" value="1"/>
</dbReference>
<dbReference type="SUPFAM" id="SSF50494">
    <property type="entry name" value="Trypsin-like serine proteases"/>
    <property type="match status" value="1"/>
</dbReference>
<dbReference type="PROSITE" id="PS50240">
    <property type="entry name" value="TRYPSIN_DOM"/>
    <property type="match status" value="1"/>
</dbReference>
<dbReference type="PROSITE" id="PS00134">
    <property type="entry name" value="TRYPSIN_HIS"/>
    <property type="match status" value="1"/>
</dbReference>
<dbReference type="PROSITE" id="PS00135">
    <property type="entry name" value="TRYPSIN_SER"/>
    <property type="match status" value="1"/>
</dbReference>
<feature type="signal peptide" evidence="2">
    <location>
        <begin position="1"/>
        <end position="18"/>
    </location>
</feature>
<feature type="propeptide" id="PRO_0000416390" evidence="1">
    <location>
        <begin position="19"/>
        <end position="24"/>
    </location>
</feature>
<feature type="chain" id="PRO_0000416391" description="Alpha-fibrinogenase albofibrase">
    <location>
        <begin position="25"/>
        <end position="258"/>
    </location>
</feature>
<feature type="domain" description="Peptidase S1" evidence="3">
    <location>
        <begin position="25"/>
        <end position="249"/>
    </location>
</feature>
<feature type="active site" description="Charge relay system" evidence="1">
    <location>
        <position position="65"/>
    </location>
</feature>
<feature type="active site" description="Charge relay system" evidence="1">
    <location>
        <position position="110"/>
    </location>
</feature>
<feature type="active site" description="Charge relay system" evidence="1">
    <location>
        <position position="204"/>
    </location>
</feature>
<feature type="glycosylation site" description="N-linked (GlcNAc...) asparagine" evidence="2">
    <location>
        <position position="44"/>
    </location>
</feature>
<feature type="disulfide bond" evidence="3">
    <location>
        <begin position="31"/>
        <end position="163"/>
    </location>
</feature>
<feature type="disulfide bond" evidence="3">
    <location>
        <begin position="50"/>
        <end position="66"/>
    </location>
</feature>
<feature type="disulfide bond" evidence="3">
    <location>
        <begin position="98"/>
        <end position="256"/>
    </location>
</feature>
<feature type="disulfide bond" evidence="3">
    <location>
        <begin position="142"/>
        <end position="210"/>
    </location>
</feature>
<feature type="disulfide bond" evidence="3">
    <location>
        <begin position="174"/>
        <end position="189"/>
    </location>
</feature>
<feature type="disulfide bond" evidence="3">
    <location>
        <begin position="200"/>
        <end position="225"/>
    </location>
</feature>
<feature type="sequence variant" description="In albofibrase-2.">
    <original>V</original>
    <variation>A</variation>
    <location>
        <position position="60"/>
    </location>
</feature>
<keyword id="KW-1015">Disulfide bond</keyword>
<keyword id="KW-1206">Fibrinogenolytic toxin</keyword>
<keyword id="KW-0325">Glycoprotein</keyword>
<keyword id="KW-1199">Hemostasis impairing toxin</keyword>
<keyword id="KW-0378">Hydrolase</keyword>
<keyword id="KW-0617">Plasminogen activation</keyword>
<keyword id="KW-0645">Protease</keyword>
<keyword id="KW-0964">Secreted</keyword>
<keyword id="KW-0720">Serine protease</keyword>
<keyword id="KW-0732">Signal</keyword>
<keyword id="KW-0800">Toxin</keyword>
<keyword id="KW-0865">Zymogen</keyword>
<protein>
    <recommendedName>
        <fullName>Alpha-fibrinogenase albofibrase</fullName>
        <ecNumber>3.4.21.-</ecNumber>
    </recommendedName>
    <alternativeName>
        <fullName>Snake venom serine protease</fullName>
        <shortName>SVSP</shortName>
    </alternativeName>
</protein>